<reference key="1">
    <citation type="journal article" date="2009" name="Science">
        <title>The dynamics and time scale of ongoing genomic erosion in symbiotic bacteria.</title>
        <authorList>
            <person name="Moran N.A."/>
            <person name="McLaughlin H.J."/>
            <person name="Sorek R."/>
        </authorList>
    </citation>
    <scope>NUCLEOTIDE SEQUENCE [LARGE SCALE GENOMIC DNA]</scope>
    <source>
        <strain>5A</strain>
    </source>
</reference>
<evidence type="ECO:0000255" key="1">
    <source>
        <dbReference type="HAMAP-Rule" id="MF_00406"/>
    </source>
</evidence>
<keyword id="KW-0963">Cytoplasm</keyword>
<keyword id="KW-0441">Lipid A biosynthesis</keyword>
<keyword id="KW-0444">Lipid biosynthesis</keyword>
<keyword id="KW-0443">Lipid metabolism</keyword>
<keyword id="KW-0456">Lyase</keyword>
<gene>
    <name evidence="1" type="primary">fabZ</name>
    <name type="ordered locus">BUAP5A_233</name>
</gene>
<name>FABZ_BUCA5</name>
<dbReference type="EC" id="4.2.1.59" evidence="1"/>
<dbReference type="EMBL" id="CP001161">
    <property type="protein sequence ID" value="ACL30606.1"/>
    <property type="molecule type" value="Genomic_DNA"/>
</dbReference>
<dbReference type="RefSeq" id="WP_009874194.1">
    <property type="nucleotide sequence ID" value="NC_011833.1"/>
</dbReference>
<dbReference type="SMR" id="B8D935"/>
<dbReference type="KEGG" id="bap:BUAP5A_233"/>
<dbReference type="HOGENOM" id="CLU_078912_1_0_6"/>
<dbReference type="OrthoDB" id="9772788at2"/>
<dbReference type="Proteomes" id="UP000006904">
    <property type="component" value="Chromosome"/>
</dbReference>
<dbReference type="GO" id="GO:0005737">
    <property type="term" value="C:cytoplasm"/>
    <property type="evidence" value="ECO:0007669"/>
    <property type="project" value="UniProtKB-SubCell"/>
</dbReference>
<dbReference type="GO" id="GO:0016020">
    <property type="term" value="C:membrane"/>
    <property type="evidence" value="ECO:0007669"/>
    <property type="project" value="GOC"/>
</dbReference>
<dbReference type="GO" id="GO:0019171">
    <property type="term" value="F:(3R)-hydroxyacyl-[acyl-carrier-protein] dehydratase activity"/>
    <property type="evidence" value="ECO:0007669"/>
    <property type="project" value="UniProtKB-EC"/>
</dbReference>
<dbReference type="GO" id="GO:0006633">
    <property type="term" value="P:fatty acid biosynthetic process"/>
    <property type="evidence" value="ECO:0007669"/>
    <property type="project" value="UniProtKB-UniRule"/>
</dbReference>
<dbReference type="GO" id="GO:0009245">
    <property type="term" value="P:lipid A biosynthetic process"/>
    <property type="evidence" value="ECO:0007669"/>
    <property type="project" value="UniProtKB-UniRule"/>
</dbReference>
<dbReference type="CDD" id="cd01288">
    <property type="entry name" value="FabZ"/>
    <property type="match status" value="1"/>
</dbReference>
<dbReference type="FunFam" id="3.10.129.10:FF:000001">
    <property type="entry name" value="3-hydroxyacyl-[acyl-carrier-protein] dehydratase FabZ"/>
    <property type="match status" value="1"/>
</dbReference>
<dbReference type="Gene3D" id="3.10.129.10">
    <property type="entry name" value="Hotdog Thioesterase"/>
    <property type="match status" value="1"/>
</dbReference>
<dbReference type="HAMAP" id="MF_00406">
    <property type="entry name" value="FabZ"/>
    <property type="match status" value="1"/>
</dbReference>
<dbReference type="InterPro" id="IPR013114">
    <property type="entry name" value="FabA_FabZ"/>
</dbReference>
<dbReference type="InterPro" id="IPR010084">
    <property type="entry name" value="FabZ"/>
</dbReference>
<dbReference type="InterPro" id="IPR029069">
    <property type="entry name" value="HotDog_dom_sf"/>
</dbReference>
<dbReference type="NCBIfam" id="TIGR01750">
    <property type="entry name" value="fabZ"/>
    <property type="match status" value="1"/>
</dbReference>
<dbReference type="NCBIfam" id="NF000582">
    <property type="entry name" value="PRK00006.1"/>
    <property type="match status" value="1"/>
</dbReference>
<dbReference type="PANTHER" id="PTHR30272">
    <property type="entry name" value="3-HYDROXYACYL-[ACYL-CARRIER-PROTEIN] DEHYDRATASE"/>
    <property type="match status" value="1"/>
</dbReference>
<dbReference type="PANTHER" id="PTHR30272:SF1">
    <property type="entry name" value="3-HYDROXYACYL-[ACYL-CARRIER-PROTEIN] DEHYDRATASE"/>
    <property type="match status" value="1"/>
</dbReference>
<dbReference type="Pfam" id="PF07977">
    <property type="entry name" value="FabA"/>
    <property type="match status" value="1"/>
</dbReference>
<dbReference type="SUPFAM" id="SSF54637">
    <property type="entry name" value="Thioesterase/thiol ester dehydrase-isomerase"/>
    <property type="match status" value="1"/>
</dbReference>
<comment type="function">
    <text evidence="1">Involved in unsaturated fatty acids biosynthesis. Catalyzes the dehydration of short chain beta-hydroxyacyl-ACPs and long chain saturated and unsaturated beta-hydroxyacyl-ACPs.</text>
</comment>
<comment type="catalytic activity">
    <reaction evidence="1">
        <text>a (3R)-hydroxyacyl-[ACP] = a (2E)-enoyl-[ACP] + H2O</text>
        <dbReference type="Rhea" id="RHEA:13097"/>
        <dbReference type="Rhea" id="RHEA-COMP:9925"/>
        <dbReference type="Rhea" id="RHEA-COMP:9945"/>
        <dbReference type="ChEBI" id="CHEBI:15377"/>
        <dbReference type="ChEBI" id="CHEBI:78784"/>
        <dbReference type="ChEBI" id="CHEBI:78827"/>
        <dbReference type="EC" id="4.2.1.59"/>
    </reaction>
</comment>
<comment type="subcellular location">
    <subcellularLocation>
        <location evidence="1">Cytoplasm</location>
    </subcellularLocation>
</comment>
<comment type="similarity">
    <text evidence="1">Belongs to the thioester dehydratase family. FabZ subfamily.</text>
</comment>
<proteinExistence type="inferred from homology"/>
<feature type="chain" id="PRO_1000134690" description="3-hydroxyacyl-[acyl-carrier-protein] dehydratase FabZ">
    <location>
        <begin position="1"/>
        <end position="151"/>
    </location>
</feature>
<feature type="active site" evidence="1">
    <location>
        <position position="54"/>
    </location>
</feature>
<accession>B8D935</accession>
<protein>
    <recommendedName>
        <fullName evidence="1">3-hydroxyacyl-[acyl-carrier-protein] dehydratase FabZ</fullName>
        <ecNumber evidence="1">4.2.1.59</ecNumber>
    </recommendedName>
    <alternativeName>
        <fullName evidence="1">(3R)-hydroxymyristoyl-[acyl-carrier-protein] dehydratase</fullName>
        <shortName evidence="1">(3R)-hydroxymyristoyl-ACP dehydrase</shortName>
    </alternativeName>
    <alternativeName>
        <fullName evidence="1">Beta-hydroxyacyl-ACP dehydratase</fullName>
    </alternativeName>
</protein>
<organism>
    <name type="scientific">Buchnera aphidicola subsp. Acyrthosiphon pisum (strain 5A)</name>
    <dbReference type="NCBI Taxonomy" id="563178"/>
    <lineage>
        <taxon>Bacteria</taxon>
        <taxon>Pseudomonadati</taxon>
        <taxon>Pseudomonadota</taxon>
        <taxon>Gammaproteobacteria</taxon>
        <taxon>Enterobacterales</taxon>
        <taxon>Erwiniaceae</taxon>
        <taxon>Buchnera</taxon>
    </lineage>
</organism>
<sequence length="151" mass="17482">MNVINNTLNIKKIFKILPHRYPFLLIDRVLNFEKFKYLQAIKNCSINEPYFQGHFSNEPVFPGVLIIESMAQAASILIYKSTGELNINKLYYFVGVDDTRFKKIAIPGDQIFIKVTILKSNKNILIFKNIAVVNNDIICKSKIVFAKKYLF</sequence>